<dbReference type="EC" id="1.11.1.-"/>
<dbReference type="EC" id="1.6.3.-"/>
<dbReference type="EMBL" id="AP003444">
    <property type="protein sequence ID" value="BAD53393.1"/>
    <property type="molecule type" value="Genomic_DNA"/>
</dbReference>
<dbReference type="EMBL" id="AP008207">
    <property type="protein sequence ID" value="BAF04934.1"/>
    <property type="molecule type" value="Genomic_DNA"/>
</dbReference>
<dbReference type="EMBL" id="AP014957">
    <property type="protein sequence ID" value="BAS72095.1"/>
    <property type="molecule type" value="Genomic_DNA"/>
</dbReference>
<dbReference type="EMBL" id="CM000138">
    <property type="protein sequence ID" value="EEE54557.1"/>
    <property type="molecule type" value="Genomic_DNA"/>
</dbReference>
<dbReference type="EMBL" id="AY603975">
    <property type="status" value="NOT_ANNOTATED_CDS"/>
    <property type="molecule type" value="mRNA"/>
</dbReference>
<dbReference type="RefSeq" id="XP_015620905.1">
    <property type="nucleotide sequence ID" value="XM_015765419.1"/>
</dbReference>
<dbReference type="PDB" id="3A8R">
    <property type="method" value="X-ray"/>
    <property type="resolution" value="2.40 A"/>
    <property type="chains" value="A/B=138-313"/>
</dbReference>
<dbReference type="PDBsum" id="3A8R"/>
<dbReference type="SMR" id="Q5ZAJ0"/>
<dbReference type="FunCoup" id="Q5ZAJ0">
    <property type="interactions" value="1249"/>
</dbReference>
<dbReference type="STRING" id="39947.Q5ZAJ0"/>
<dbReference type="PeroxiBase" id="5564">
    <property type="entry name" value="OsRboh01"/>
</dbReference>
<dbReference type="PaxDb" id="39947-Q5ZAJ0"/>
<dbReference type="EnsemblPlants" id="Os01t0360200-01">
    <property type="protein sequence ID" value="Os01t0360200-01"/>
    <property type="gene ID" value="Os01g0360200"/>
</dbReference>
<dbReference type="EnsemblPlants" id="Os01t0360200-03">
    <property type="protein sequence ID" value="Os01t0360200-03"/>
    <property type="gene ID" value="Os01g0360200"/>
</dbReference>
<dbReference type="Gramene" id="Os01t0360200-01">
    <property type="protein sequence ID" value="Os01t0360200-01"/>
    <property type="gene ID" value="Os01g0360200"/>
</dbReference>
<dbReference type="Gramene" id="Os01t0360200-03">
    <property type="protein sequence ID" value="Os01t0360200-03"/>
    <property type="gene ID" value="Os01g0360200"/>
</dbReference>
<dbReference type="KEGG" id="dosa:Os01g0360200"/>
<dbReference type="eggNOG" id="KOG0039">
    <property type="taxonomic scope" value="Eukaryota"/>
</dbReference>
<dbReference type="HOGENOM" id="CLU_005646_6_0_1"/>
<dbReference type="InParanoid" id="Q5ZAJ0"/>
<dbReference type="OMA" id="FHHATHE"/>
<dbReference type="OrthoDB" id="167398at2759"/>
<dbReference type="PlantReactome" id="R-OSA-9611432">
    <property type="pathway name" value="Recognition of fungal and bacterial pathogens and immunity response"/>
</dbReference>
<dbReference type="EvolutionaryTrace" id="Q5ZAJ0"/>
<dbReference type="Proteomes" id="UP000000763">
    <property type="component" value="Chromosome 1"/>
</dbReference>
<dbReference type="Proteomes" id="UP000007752">
    <property type="component" value="Chromosome 1"/>
</dbReference>
<dbReference type="Proteomes" id="UP000059680">
    <property type="component" value="Chromosome 1"/>
</dbReference>
<dbReference type="GO" id="GO:0005886">
    <property type="term" value="C:plasma membrane"/>
    <property type="evidence" value="ECO:0000318"/>
    <property type="project" value="GO_Central"/>
</dbReference>
<dbReference type="GO" id="GO:0005509">
    <property type="term" value="F:calcium ion binding"/>
    <property type="evidence" value="ECO:0000314"/>
    <property type="project" value="UniProtKB"/>
</dbReference>
<dbReference type="GO" id="GO:0016174">
    <property type="term" value="F:NAD(P)H oxidase H2O2-forming activity"/>
    <property type="evidence" value="ECO:0000318"/>
    <property type="project" value="GO_Central"/>
</dbReference>
<dbReference type="GO" id="GO:0004601">
    <property type="term" value="F:peroxidase activity"/>
    <property type="evidence" value="ECO:0007669"/>
    <property type="project" value="UniProtKB-KW"/>
</dbReference>
<dbReference type="CDD" id="cd06186">
    <property type="entry name" value="NOX_Duox_like_FAD_NADP"/>
    <property type="match status" value="1"/>
</dbReference>
<dbReference type="FunFam" id="1.10.238.10:FF:000049">
    <property type="entry name" value="Respiratory burst oxidase homolog A"/>
    <property type="match status" value="1"/>
</dbReference>
<dbReference type="FunFam" id="2.40.30.10:FF:000019">
    <property type="entry name" value="Respiratory burst oxidase homolog A"/>
    <property type="match status" value="1"/>
</dbReference>
<dbReference type="FunFam" id="3.40.50.80:FF:000034">
    <property type="entry name" value="Respiratory burst oxidase homolog protein B"/>
    <property type="match status" value="1"/>
</dbReference>
<dbReference type="Gene3D" id="1.10.238.10">
    <property type="entry name" value="EF-hand"/>
    <property type="match status" value="1"/>
</dbReference>
<dbReference type="Gene3D" id="3.40.50.80">
    <property type="entry name" value="Nucleotide-binding domain of ferredoxin-NADP reductase (FNR) module"/>
    <property type="match status" value="1"/>
</dbReference>
<dbReference type="Gene3D" id="2.40.30.10">
    <property type="entry name" value="Translation factors"/>
    <property type="match status" value="1"/>
</dbReference>
<dbReference type="InterPro" id="IPR000778">
    <property type="entry name" value="Cyt_b245_heavy_chain"/>
</dbReference>
<dbReference type="InterPro" id="IPR011992">
    <property type="entry name" value="EF-hand-dom_pair"/>
</dbReference>
<dbReference type="InterPro" id="IPR018247">
    <property type="entry name" value="EF_Hand_1_Ca_BS"/>
</dbReference>
<dbReference type="InterPro" id="IPR002048">
    <property type="entry name" value="EF_hand_dom"/>
</dbReference>
<dbReference type="InterPro" id="IPR013112">
    <property type="entry name" value="FAD-bd_8"/>
</dbReference>
<dbReference type="InterPro" id="IPR017927">
    <property type="entry name" value="FAD-bd_FR_type"/>
</dbReference>
<dbReference type="InterPro" id="IPR013130">
    <property type="entry name" value="Fe3_Rdtase_TM_dom"/>
</dbReference>
<dbReference type="InterPro" id="IPR013121">
    <property type="entry name" value="Fe_red_NAD-bd_6"/>
</dbReference>
<dbReference type="InterPro" id="IPR039261">
    <property type="entry name" value="FNR_nucleotide-bd"/>
</dbReference>
<dbReference type="InterPro" id="IPR013623">
    <property type="entry name" value="NADPH_Ox"/>
</dbReference>
<dbReference type="InterPro" id="IPR050369">
    <property type="entry name" value="RBOH/FRE"/>
</dbReference>
<dbReference type="InterPro" id="IPR017938">
    <property type="entry name" value="Riboflavin_synthase-like_b-brl"/>
</dbReference>
<dbReference type="PANTHER" id="PTHR11972">
    <property type="entry name" value="NADPH OXIDASE"/>
    <property type="match status" value="1"/>
</dbReference>
<dbReference type="PANTHER" id="PTHR11972:SF64">
    <property type="entry name" value="RESPIRATORY BURST OXIDASE HOMOLOG PROTEIN B"/>
    <property type="match status" value="1"/>
</dbReference>
<dbReference type="Pfam" id="PF08022">
    <property type="entry name" value="FAD_binding_8"/>
    <property type="match status" value="1"/>
</dbReference>
<dbReference type="Pfam" id="PF01794">
    <property type="entry name" value="Ferric_reduct"/>
    <property type="match status" value="1"/>
</dbReference>
<dbReference type="Pfam" id="PF08030">
    <property type="entry name" value="NAD_binding_6"/>
    <property type="match status" value="1"/>
</dbReference>
<dbReference type="Pfam" id="PF08414">
    <property type="entry name" value="NADPH_Ox"/>
    <property type="match status" value="1"/>
</dbReference>
<dbReference type="PRINTS" id="PR00466">
    <property type="entry name" value="GP91PHOX"/>
</dbReference>
<dbReference type="SFLD" id="SFLDG01169">
    <property type="entry name" value="NADPH_oxidase_subgroup_(NOX)"/>
    <property type="match status" value="1"/>
</dbReference>
<dbReference type="SUPFAM" id="SSF47473">
    <property type="entry name" value="EF-hand"/>
    <property type="match status" value="1"/>
</dbReference>
<dbReference type="SUPFAM" id="SSF52343">
    <property type="entry name" value="Ferredoxin reductase-like, C-terminal NADP-linked domain"/>
    <property type="match status" value="1"/>
</dbReference>
<dbReference type="SUPFAM" id="SSF63380">
    <property type="entry name" value="Riboflavin synthase domain-like"/>
    <property type="match status" value="1"/>
</dbReference>
<dbReference type="PROSITE" id="PS00018">
    <property type="entry name" value="EF_HAND_1"/>
    <property type="match status" value="1"/>
</dbReference>
<dbReference type="PROSITE" id="PS50222">
    <property type="entry name" value="EF_HAND_2"/>
    <property type="match status" value="2"/>
</dbReference>
<dbReference type="PROSITE" id="PS51384">
    <property type="entry name" value="FAD_FR"/>
    <property type="match status" value="1"/>
</dbReference>
<gene>
    <name type="primary">RBOHB</name>
    <name type="ordered locus">Os01g0360200</name>
    <name type="ordered locus">LOC_Os01g25820</name>
    <name type="ORF">B1164G11.26</name>
    <name type="ORF">OsJ_01746</name>
</gene>
<comment type="function">
    <text evidence="1">Calcium-dependent NADPH oxidase that generates superoxide.</text>
</comment>
<comment type="subunit">
    <text evidence="6">Monomer and homodimer, stabilized by swapping the EF-hand motifs. Interacts with GTP-bound RAC1.</text>
</comment>
<comment type="subcellular location">
    <subcellularLocation>
        <location evidence="7">Membrane</location>
        <topology evidence="7">Multi-pass membrane protein</topology>
    </subcellularLocation>
</comment>
<comment type="similarity">
    <text evidence="7">Belongs to the RBOH (TC 5.B.1.3) family.</text>
</comment>
<reference key="1">
    <citation type="journal article" date="2002" name="Nature">
        <title>The genome sequence and structure of rice chromosome 1.</title>
        <authorList>
            <person name="Sasaki T."/>
            <person name="Matsumoto T."/>
            <person name="Yamamoto K."/>
            <person name="Sakata K."/>
            <person name="Baba T."/>
            <person name="Katayose Y."/>
            <person name="Wu J."/>
            <person name="Niimura Y."/>
            <person name="Cheng Z."/>
            <person name="Nagamura Y."/>
            <person name="Antonio B.A."/>
            <person name="Kanamori H."/>
            <person name="Hosokawa S."/>
            <person name="Masukawa M."/>
            <person name="Arikawa K."/>
            <person name="Chiden Y."/>
            <person name="Hayashi M."/>
            <person name="Okamoto M."/>
            <person name="Ando T."/>
            <person name="Aoki H."/>
            <person name="Arita K."/>
            <person name="Hamada M."/>
            <person name="Harada C."/>
            <person name="Hijishita S."/>
            <person name="Honda M."/>
            <person name="Ichikawa Y."/>
            <person name="Idonuma A."/>
            <person name="Iijima M."/>
            <person name="Ikeda M."/>
            <person name="Ikeno M."/>
            <person name="Ito S."/>
            <person name="Ito T."/>
            <person name="Ito Y."/>
            <person name="Ito Y."/>
            <person name="Iwabuchi A."/>
            <person name="Kamiya K."/>
            <person name="Karasawa W."/>
            <person name="Katagiri S."/>
            <person name="Kikuta A."/>
            <person name="Kobayashi N."/>
            <person name="Kono I."/>
            <person name="Machita K."/>
            <person name="Maehara T."/>
            <person name="Mizuno H."/>
            <person name="Mizubayashi T."/>
            <person name="Mukai Y."/>
            <person name="Nagasaki H."/>
            <person name="Nakashima M."/>
            <person name="Nakama Y."/>
            <person name="Nakamichi Y."/>
            <person name="Nakamura M."/>
            <person name="Namiki N."/>
            <person name="Negishi M."/>
            <person name="Ohta I."/>
            <person name="Ono N."/>
            <person name="Saji S."/>
            <person name="Sakai K."/>
            <person name="Shibata M."/>
            <person name="Shimokawa T."/>
            <person name="Shomura A."/>
            <person name="Song J."/>
            <person name="Takazaki Y."/>
            <person name="Terasawa K."/>
            <person name="Tsuji K."/>
            <person name="Waki K."/>
            <person name="Yamagata H."/>
            <person name="Yamane H."/>
            <person name="Yoshiki S."/>
            <person name="Yoshihara R."/>
            <person name="Yukawa K."/>
            <person name="Zhong H."/>
            <person name="Iwama H."/>
            <person name="Endo T."/>
            <person name="Ito H."/>
            <person name="Hahn J.H."/>
            <person name="Kim H.-I."/>
            <person name="Eun M.-Y."/>
            <person name="Yano M."/>
            <person name="Jiang J."/>
            <person name="Gojobori T."/>
        </authorList>
    </citation>
    <scope>NUCLEOTIDE SEQUENCE [LARGE SCALE GENOMIC DNA]</scope>
    <source>
        <strain>cv. Nipponbare</strain>
    </source>
</reference>
<reference key="2">
    <citation type="journal article" date="2005" name="Nature">
        <title>The map-based sequence of the rice genome.</title>
        <authorList>
            <consortium name="International rice genome sequencing project (IRGSP)"/>
        </authorList>
    </citation>
    <scope>NUCLEOTIDE SEQUENCE [LARGE SCALE GENOMIC DNA]</scope>
    <source>
        <strain>cv. Nipponbare</strain>
    </source>
</reference>
<reference key="3">
    <citation type="journal article" date="2008" name="Nucleic Acids Res.">
        <title>The rice annotation project database (RAP-DB): 2008 update.</title>
        <authorList>
            <consortium name="The rice annotation project (RAP)"/>
        </authorList>
    </citation>
    <scope>GENOME REANNOTATION</scope>
    <source>
        <strain>cv. Nipponbare</strain>
    </source>
</reference>
<reference key="4">
    <citation type="journal article" date="2013" name="Rice">
        <title>Improvement of the Oryza sativa Nipponbare reference genome using next generation sequence and optical map data.</title>
        <authorList>
            <person name="Kawahara Y."/>
            <person name="de la Bastide M."/>
            <person name="Hamilton J.P."/>
            <person name="Kanamori H."/>
            <person name="McCombie W.R."/>
            <person name="Ouyang S."/>
            <person name="Schwartz D.C."/>
            <person name="Tanaka T."/>
            <person name="Wu J."/>
            <person name="Zhou S."/>
            <person name="Childs K.L."/>
            <person name="Davidson R.M."/>
            <person name="Lin H."/>
            <person name="Quesada-Ocampo L."/>
            <person name="Vaillancourt B."/>
            <person name="Sakai H."/>
            <person name="Lee S.S."/>
            <person name="Kim J."/>
            <person name="Numa H."/>
            <person name="Itoh T."/>
            <person name="Buell C.R."/>
            <person name="Matsumoto T."/>
        </authorList>
    </citation>
    <scope>GENOME REANNOTATION</scope>
    <source>
        <strain>cv. Nipponbare</strain>
    </source>
</reference>
<reference key="5">
    <citation type="journal article" date="2005" name="PLoS Biol.">
        <title>The genomes of Oryza sativa: a history of duplications.</title>
        <authorList>
            <person name="Yu J."/>
            <person name="Wang J."/>
            <person name="Lin W."/>
            <person name="Li S."/>
            <person name="Li H."/>
            <person name="Zhou J."/>
            <person name="Ni P."/>
            <person name="Dong W."/>
            <person name="Hu S."/>
            <person name="Zeng C."/>
            <person name="Zhang J."/>
            <person name="Zhang Y."/>
            <person name="Li R."/>
            <person name="Xu Z."/>
            <person name="Li S."/>
            <person name="Li X."/>
            <person name="Zheng H."/>
            <person name="Cong L."/>
            <person name="Lin L."/>
            <person name="Yin J."/>
            <person name="Geng J."/>
            <person name="Li G."/>
            <person name="Shi J."/>
            <person name="Liu J."/>
            <person name="Lv H."/>
            <person name="Li J."/>
            <person name="Wang J."/>
            <person name="Deng Y."/>
            <person name="Ran L."/>
            <person name="Shi X."/>
            <person name="Wang X."/>
            <person name="Wu Q."/>
            <person name="Li C."/>
            <person name="Ren X."/>
            <person name="Wang J."/>
            <person name="Wang X."/>
            <person name="Li D."/>
            <person name="Liu D."/>
            <person name="Zhang X."/>
            <person name="Ji Z."/>
            <person name="Zhao W."/>
            <person name="Sun Y."/>
            <person name="Zhang Z."/>
            <person name="Bao J."/>
            <person name="Han Y."/>
            <person name="Dong L."/>
            <person name="Ji J."/>
            <person name="Chen P."/>
            <person name="Wu S."/>
            <person name="Liu J."/>
            <person name="Xiao Y."/>
            <person name="Bu D."/>
            <person name="Tan J."/>
            <person name="Yang L."/>
            <person name="Ye C."/>
            <person name="Zhang J."/>
            <person name="Xu J."/>
            <person name="Zhou Y."/>
            <person name="Yu Y."/>
            <person name="Zhang B."/>
            <person name="Zhuang S."/>
            <person name="Wei H."/>
            <person name="Liu B."/>
            <person name="Lei M."/>
            <person name="Yu H."/>
            <person name="Li Y."/>
            <person name="Xu H."/>
            <person name="Wei S."/>
            <person name="He X."/>
            <person name="Fang L."/>
            <person name="Zhang Z."/>
            <person name="Zhang Y."/>
            <person name="Huang X."/>
            <person name="Su Z."/>
            <person name="Tong W."/>
            <person name="Li J."/>
            <person name="Tong Z."/>
            <person name="Li S."/>
            <person name="Ye J."/>
            <person name="Wang L."/>
            <person name="Fang L."/>
            <person name="Lei T."/>
            <person name="Chen C.-S."/>
            <person name="Chen H.-C."/>
            <person name="Xu Z."/>
            <person name="Li H."/>
            <person name="Huang H."/>
            <person name="Zhang F."/>
            <person name="Xu H."/>
            <person name="Li N."/>
            <person name="Zhao C."/>
            <person name="Li S."/>
            <person name="Dong L."/>
            <person name="Huang Y."/>
            <person name="Li L."/>
            <person name="Xi Y."/>
            <person name="Qi Q."/>
            <person name="Li W."/>
            <person name="Zhang B."/>
            <person name="Hu W."/>
            <person name="Zhang Y."/>
            <person name="Tian X."/>
            <person name="Jiao Y."/>
            <person name="Liang X."/>
            <person name="Jin J."/>
            <person name="Gao L."/>
            <person name="Zheng W."/>
            <person name="Hao B."/>
            <person name="Liu S.-M."/>
            <person name="Wang W."/>
            <person name="Yuan L."/>
            <person name="Cao M."/>
            <person name="McDermott J."/>
            <person name="Samudrala R."/>
            <person name="Wang J."/>
            <person name="Wong G.K.-S."/>
            <person name="Yang H."/>
        </authorList>
    </citation>
    <scope>NUCLEOTIDE SEQUENCE [LARGE SCALE GENOMIC DNA]</scope>
    <source>
        <strain>cv. Nipponbare</strain>
    </source>
</reference>
<reference key="6">
    <citation type="journal article" date="2008" name="Acta Crystallogr. F">
        <title>Crystallographic characterization of the N-terminal domain of a plant NADPH oxidase.</title>
        <authorList>
            <person name="Oda T."/>
            <person name="Hashimoto H."/>
            <person name="Kuwabara N."/>
            <person name="Hayashi K."/>
            <person name="Kojima C."/>
            <person name="Kawasaki T."/>
            <person name="Shimamoto K."/>
            <person name="Sato M."/>
            <person name="Shimizu T."/>
        </authorList>
    </citation>
    <scope>X-RAY CRYSTALLOGRAPHY (2.40 ANGSTROMS) OF 138-313</scope>
    <scope>HOMODIMERIZATION</scope>
</reference>
<reference key="7">
    <citation type="journal article" date="2010" name="J. Biol. Chem.">
        <title>Structure of the N-terminal regulatory domain of a plant NADPH oxidase and its functional implications.</title>
        <authorList>
            <person name="Oda T."/>
            <person name="Hashimoto H."/>
            <person name="Kuwabara N."/>
            <person name="Akashi S."/>
            <person name="Hayashi K."/>
            <person name="Kojima C."/>
            <person name="Wong H.L."/>
            <person name="Kawasaki T."/>
            <person name="Shimamoto K."/>
            <person name="Sato M."/>
            <person name="Shimizu T."/>
        </authorList>
    </citation>
    <scope>X-RAY CRYSTALLOGRAPHY (2.40 ANGSTROMS) OF 138-313 IN COMPLEX WITH CALCIUM ION</scope>
    <scope>HOMODIMERIZATION</scope>
    <scope>MUTAGENESIS OF GLU-253; 260-LEU--ALA-274; ARG-273 AND TYR-277</scope>
    <scope>EF-HAND DOMAINS</scope>
    <scope>INTERACTION WITH RAC1</scope>
</reference>
<feature type="chain" id="PRO_0000403420" description="Respiratory burst oxidase homolog protein B">
    <location>
        <begin position="1"/>
        <end position="905"/>
    </location>
</feature>
<feature type="topological domain" description="Cytoplasmic" evidence="2">
    <location>
        <begin position="1"/>
        <end position="355"/>
    </location>
</feature>
<feature type="transmembrane region" description="Helical; Name=1" evidence="2">
    <location>
        <begin position="356"/>
        <end position="376"/>
    </location>
</feature>
<feature type="topological domain" description="Extracellular" evidence="2">
    <location>
        <begin position="377"/>
        <end position="440"/>
    </location>
</feature>
<feature type="transmembrane region" description="Helical; Name=2" evidence="2">
    <location>
        <begin position="441"/>
        <end position="461"/>
    </location>
</feature>
<feature type="topological domain" description="Cytoplasmic" evidence="2">
    <location>
        <begin position="462"/>
        <end position="496"/>
    </location>
</feature>
<feature type="transmembrane region" description="Helical; Name=3" evidence="2">
    <location>
        <begin position="497"/>
        <end position="517"/>
    </location>
</feature>
<feature type="topological domain" description="Extracellular" evidence="2">
    <location>
        <begin position="518"/>
        <end position="539"/>
    </location>
</feature>
<feature type="transmembrane region" description="Helical; Name=4" evidence="2">
    <location>
        <begin position="540"/>
        <end position="560"/>
    </location>
</feature>
<feature type="topological domain" description="Cytoplasmic" evidence="2">
    <location>
        <begin position="561"/>
        <end position="568"/>
    </location>
</feature>
<feature type="transmembrane region" description="Helical; Name=5" evidence="2">
    <location>
        <begin position="569"/>
        <end position="586"/>
    </location>
</feature>
<feature type="topological domain" description="Extracellular" evidence="2">
    <location>
        <begin position="587"/>
        <end position="717"/>
    </location>
</feature>
<feature type="transmembrane region" description="Helical; Name=6" evidence="2">
    <location>
        <begin position="718"/>
        <end position="738"/>
    </location>
</feature>
<feature type="topological domain" description="Cytoplasmic" evidence="2">
    <location>
        <begin position="739"/>
        <end position="905"/>
    </location>
</feature>
<feature type="domain" description="EF-hand 1" evidence="3">
    <location>
        <begin position="229"/>
        <end position="264"/>
    </location>
</feature>
<feature type="domain" description="EF-hand 2" evidence="3">
    <location>
        <begin position="273"/>
        <end position="308"/>
    </location>
</feature>
<feature type="domain" description="Ferric oxidoreductase">
    <location>
        <begin position="395"/>
        <end position="551"/>
    </location>
</feature>
<feature type="domain" description="FAD-binding FR-type" evidence="4">
    <location>
        <begin position="587"/>
        <end position="715"/>
    </location>
</feature>
<feature type="region of interest" description="Disordered" evidence="5">
    <location>
        <begin position="1"/>
        <end position="46"/>
    </location>
</feature>
<feature type="region of interest" description="Disordered" evidence="5">
    <location>
        <begin position="69"/>
        <end position="134"/>
    </location>
</feature>
<feature type="region of interest" description="EF-hand-like 1">
    <location>
        <begin position="172"/>
        <end position="180"/>
    </location>
</feature>
<feature type="region of interest" description="EF-hand-like 2">
    <location>
        <begin position="206"/>
        <end position="217"/>
    </location>
</feature>
<feature type="compositionally biased region" description="Polar residues" evidence="5">
    <location>
        <begin position="29"/>
        <end position="44"/>
    </location>
</feature>
<feature type="compositionally biased region" description="Gly residues" evidence="5">
    <location>
        <begin position="75"/>
        <end position="84"/>
    </location>
</feature>
<feature type="compositionally biased region" description="Polar residues" evidence="5">
    <location>
        <begin position="91"/>
        <end position="108"/>
    </location>
</feature>
<feature type="binding site" evidence="3">
    <location>
        <position position="242"/>
    </location>
    <ligand>
        <name>Ca(2+)</name>
        <dbReference type="ChEBI" id="CHEBI:29108"/>
    </ligand>
</feature>
<feature type="binding site" evidence="3">
    <location>
        <position position="244"/>
    </location>
    <ligand>
        <name>Ca(2+)</name>
        <dbReference type="ChEBI" id="CHEBI:29108"/>
    </ligand>
</feature>
<feature type="binding site" evidence="3">
    <location>
        <position position="246"/>
    </location>
    <ligand>
        <name>Ca(2+)</name>
        <dbReference type="ChEBI" id="CHEBI:29108"/>
    </ligand>
</feature>
<feature type="binding site" evidence="3">
    <location>
        <position position="248"/>
    </location>
    <ligand>
        <name>Ca(2+)</name>
        <dbReference type="ChEBI" id="CHEBI:29108"/>
    </ligand>
</feature>
<feature type="binding site" evidence="3">
    <location>
        <position position="253"/>
    </location>
    <ligand>
        <name>Ca(2+)</name>
        <dbReference type="ChEBI" id="CHEBI:29108"/>
    </ligand>
</feature>
<feature type="mutagenesis site" description="Impaired calcium binding." evidence="6">
    <original>E</original>
    <variation>A</variation>
    <location>
        <position position="253"/>
    </location>
</feature>
<feature type="mutagenesis site" description="Loss of RAC1-binding." evidence="6">
    <location>
        <begin position="260"/>
        <end position="274"/>
    </location>
</feature>
<feature type="mutagenesis site" description="Reduced RAC1-binding." evidence="6">
    <original>R</original>
    <variation>N</variation>
    <location>
        <position position="273"/>
    </location>
</feature>
<feature type="mutagenesis site" description="Reduced RAC1-binding." evidence="6">
    <original>Y</original>
    <variation>Q</variation>
    <location>
        <position position="277"/>
    </location>
</feature>
<feature type="helix" evidence="8">
    <location>
        <begin position="139"/>
        <end position="156"/>
    </location>
</feature>
<feature type="helix" evidence="8">
    <location>
        <begin position="161"/>
        <end position="171"/>
    </location>
</feature>
<feature type="strand" evidence="8">
    <location>
        <begin position="176"/>
        <end position="178"/>
    </location>
</feature>
<feature type="helix" evidence="8">
    <location>
        <begin position="179"/>
        <end position="181"/>
    </location>
</feature>
<feature type="helix" evidence="8">
    <location>
        <begin position="182"/>
        <end position="186"/>
    </location>
</feature>
<feature type="helix" evidence="8">
    <location>
        <begin position="192"/>
        <end position="205"/>
    </location>
</feature>
<feature type="strand" evidence="8">
    <location>
        <begin position="210"/>
        <end position="213"/>
    </location>
</feature>
<feature type="helix" evidence="8">
    <location>
        <begin position="215"/>
        <end position="226"/>
    </location>
</feature>
<feature type="helix" evidence="8">
    <location>
        <begin position="230"/>
        <end position="241"/>
    </location>
</feature>
<feature type="helix" evidence="8">
    <location>
        <begin position="251"/>
        <end position="263"/>
    </location>
</feature>
<feature type="helix" evidence="8">
    <location>
        <begin position="266"/>
        <end position="285"/>
    </location>
</feature>
<feature type="strand" evidence="8">
    <location>
        <begin position="291"/>
        <end position="293"/>
    </location>
</feature>
<feature type="helix" evidence="8">
    <location>
        <begin position="295"/>
        <end position="302"/>
    </location>
</feature>
<evidence type="ECO:0000250" key="1"/>
<evidence type="ECO:0000255" key="2"/>
<evidence type="ECO:0000255" key="3">
    <source>
        <dbReference type="PROSITE-ProRule" id="PRU00448"/>
    </source>
</evidence>
<evidence type="ECO:0000255" key="4">
    <source>
        <dbReference type="PROSITE-ProRule" id="PRU00716"/>
    </source>
</evidence>
<evidence type="ECO:0000256" key="5">
    <source>
        <dbReference type="SAM" id="MobiDB-lite"/>
    </source>
</evidence>
<evidence type="ECO:0000269" key="6">
    <source>
    </source>
</evidence>
<evidence type="ECO:0000305" key="7"/>
<evidence type="ECO:0007829" key="8">
    <source>
        <dbReference type="PDB" id="3A8R"/>
    </source>
</evidence>
<protein>
    <recommendedName>
        <fullName>Respiratory burst oxidase homolog protein B</fullName>
        <ecNumber>1.11.1.-</ecNumber>
        <ecNumber>1.6.3.-</ecNumber>
    </recommendedName>
    <alternativeName>
        <fullName>NADPH oxidase RBOHB</fullName>
        <shortName>OsrbohB</shortName>
    </alternativeName>
</protein>
<organism>
    <name type="scientific">Oryza sativa subsp. japonica</name>
    <name type="common">Rice</name>
    <dbReference type="NCBI Taxonomy" id="39947"/>
    <lineage>
        <taxon>Eukaryota</taxon>
        <taxon>Viridiplantae</taxon>
        <taxon>Streptophyta</taxon>
        <taxon>Embryophyta</taxon>
        <taxon>Tracheophyta</taxon>
        <taxon>Spermatophyta</taxon>
        <taxon>Magnoliopsida</taxon>
        <taxon>Liliopsida</taxon>
        <taxon>Poales</taxon>
        <taxon>Poaceae</taxon>
        <taxon>BOP clade</taxon>
        <taxon>Oryzoideae</taxon>
        <taxon>Oryzeae</taxon>
        <taxon>Oryzinae</taxon>
        <taxon>Oryza</taxon>
        <taxon>Oryza sativa</taxon>
    </lineage>
</organism>
<proteinExistence type="evidence at protein level"/>
<sequence length="905" mass="101759">MADLEAGMVAAATDQGNSTRSQDDAATLIPNSGNLGSSNRSTKTARFKDDDELVEITLDVQRDSVAIQEVRGVDEGGSGHGTGFDGLPLVSPSSKSGKLTSKLRQVTNGLKMKSSSRKAPSPQAQQSAKRVRKRLDRTKSSAAVALKGLQFVTAKVGNDGWAAVEKRFNQLQVDGVLLRSRFGKCIGMDGSDEFAVQMFDSLARKRGIVKQVLTKDELKDFYEQLTDQGFDNRLRTFFDMVDKNADGRLTAEEVKEIIALSASANKLSKIKERADEYTALIMEELDPTNLGYIEMEDLEALLLQSPSEAAARSTTTHSSKLSKALSMKLASNKEMSPVRHYWQQFMYFLEENWKRSWVMTLWISICIALFIWKFIQYRNRAVFGIMGYCVTTAKGAAETLKFNMALVLLPVCRNTITWIRSKTQVGAVVPFNDNINFHKVIAAGVAVGVALHAGAHLTCDFPRLLHASDAQYELMKPFFGEKRPPNYWWFVKGTEGWTGVVMVVLMAIAFTLAQPWFRRNKLKDSNPLKKMTGFNAFWFTHHLFVIVYTLLFVHGTCLYLSRKWYKKTTWMYLAVPVVLYVSERILRLFRSHDAVGIQKVAVYPGNVLALYMSKPPGFRYRSGQYIFIKCTAVSPYEWHPFSITSAPGDDYLSVHIRTRGDWTSRLRTVFSEACRPPTEGESGLLRADLSKGITDEKARFPKLLVDGPYGAPAQDYREYDVLLLIGLGIGATPLISIVKDVLNHIQGEGSVGTTEPESSSKAKKKPFMTKRAYFYWVTREEGSFEWFRGVMNEVSEKDKDGVIELHNHCSSVYQEGDARSALIVMLQELQHAKKGVDILSGTSVKTHFARPNWRSVFKKVAVSHENQRVGVFYCGEPVLVPQLRQLSADFTHKTNTRFDFHKENF</sequence>
<accession>Q5ZAJ0</accession>
<accession>A0A0P0V2T2</accession>
<keyword id="KW-0002">3D-structure</keyword>
<keyword id="KW-0106">Calcium</keyword>
<keyword id="KW-0274">FAD</keyword>
<keyword id="KW-0285">Flavoprotein</keyword>
<keyword id="KW-0472">Membrane</keyword>
<keyword id="KW-0479">Metal-binding</keyword>
<keyword id="KW-0521">NADP</keyword>
<keyword id="KW-0560">Oxidoreductase</keyword>
<keyword id="KW-0575">Peroxidase</keyword>
<keyword id="KW-1185">Reference proteome</keyword>
<keyword id="KW-0677">Repeat</keyword>
<keyword id="KW-0812">Transmembrane</keyword>
<keyword id="KW-1133">Transmembrane helix</keyword>
<name>RBOHB_ORYSJ</name>